<comment type="function">
    <text evidence="1">Catalyzes the attachment of L-aspartate to tRNA(Asp) in a two-step reaction: L-aspartate is first activated by ATP to form Asp-AMP and then transferred to the acceptor end of tRNA(Asp).</text>
</comment>
<comment type="catalytic activity">
    <reaction evidence="1">
        <text>tRNA(Asp) + L-aspartate + ATP = L-aspartyl-tRNA(Asp) + AMP + diphosphate</text>
        <dbReference type="Rhea" id="RHEA:19649"/>
        <dbReference type="Rhea" id="RHEA-COMP:9660"/>
        <dbReference type="Rhea" id="RHEA-COMP:9678"/>
        <dbReference type="ChEBI" id="CHEBI:29991"/>
        <dbReference type="ChEBI" id="CHEBI:30616"/>
        <dbReference type="ChEBI" id="CHEBI:33019"/>
        <dbReference type="ChEBI" id="CHEBI:78442"/>
        <dbReference type="ChEBI" id="CHEBI:78516"/>
        <dbReference type="ChEBI" id="CHEBI:456215"/>
        <dbReference type="EC" id="6.1.1.12"/>
    </reaction>
</comment>
<comment type="subunit">
    <text evidence="1">Homodimer.</text>
</comment>
<comment type="subcellular location">
    <subcellularLocation>
        <location evidence="1">Cytoplasm</location>
    </subcellularLocation>
</comment>
<comment type="similarity">
    <text evidence="1">Belongs to the class-II aminoacyl-tRNA synthetase family. Type 1 subfamily.</text>
</comment>
<keyword id="KW-0030">Aminoacyl-tRNA synthetase</keyword>
<keyword id="KW-0067">ATP-binding</keyword>
<keyword id="KW-0963">Cytoplasm</keyword>
<keyword id="KW-0436">Ligase</keyword>
<keyword id="KW-0547">Nucleotide-binding</keyword>
<keyword id="KW-0648">Protein biosynthesis</keyword>
<proteinExistence type="inferred from homology"/>
<feature type="chain" id="PRO_0000110942" description="Aspartate--tRNA ligase">
    <location>
        <begin position="1"/>
        <end position="588"/>
    </location>
</feature>
<feature type="region of interest" description="Aspartate" evidence="1">
    <location>
        <begin position="201"/>
        <end position="204"/>
    </location>
</feature>
<feature type="binding site" evidence="1">
    <location>
        <position position="177"/>
    </location>
    <ligand>
        <name>L-aspartate</name>
        <dbReference type="ChEBI" id="CHEBI:29991"/>
    </ligand>
</feature>
<feature type="binding site" evidence="1">
    <location>
        <begin position="223"/>
        <end position="225"/>
    </location>
    <ligand>
        <name>ATP</name>
        <dbReference type="ChEBI" id="CHEBI:30616"/>
    </ligand>
</feature>
<feature type="binding site" evidence="1">
    <location>
        <position position="223"/>
    </location>
    <ligand>
        <name>L-aspartate</name>
        <dbReference type="ChEBI" id="CHEBI:29991"/>
    </ligand>
</feature>
<feature type="binding site" evidence="1">
    <location>
        <position position="232"/>
    </location>
    <ligand>
        <name>ATP</name>
        <dbReference type="ChEBI" id="CHEBI:30616"/>
    </ligand>
</feature>
<feature type="binding site" evidence="1">
    <location>
        <position position="451"/>
    </location>
    <ligand>
        <name>L-aspartate</name>
        <dbReference type="ChEBI" id="CHEBI:29991"/>
    </ligand>
</feature>
<feature type="binding site" evidence="1">
    <location>
        <position position="485"/>
    </location>
    <ligand>
        <name>ATP</name>
        <dbReference type="ChEBI" id="CHEBI:30616"/>
    </ligand>
</feature>
<feature type="binding site" evidence="1">
    <location>
        <position position="492"/>
    </location>
    <ligand>
        <name>L-aspartate</name>
        <dbReference type="ChEBI" id="CHEBI:29991"/>
    </ligand>
</feature>
<feature type="binding site" evidence="1">
    <location>
        <begin position="537"/>
        <end position="540"/>
    </location>
    <ligand>
        <name>ATP</name>
        <dbReference type="ChEBI" id="CHEBI:30616"/>
    </ligand>
</feature>
<reference key="1">
    <citation type="journal article" date="2001" name="Lancet">
        <title>Whole genome sequencing of meticillin-resistant Staphylococcus aureus.</title>
        <authorList>
            <person name="Kuroda M."/>
            <person name="Ohta T."/>
            <person name="Uchiyama I."/>
            <person name="Baba T."/>
            <person name="Yuzawa H."/>
            <person name="Kobayashi I."/>
            <person name="Cui L."/>
            <person name="Oguchi A."/>
            <person name="Aoki K."/>
            <person name="Nagai Y."/>
            <person name="Lian J.-Q."/>
            <person name="Ito T."/>
            <person name="Kanamori M."/>
            <person name="Matsumaru H."/>
            <person name="Maruyama A."/>
            <person name="Murakami H."/>
            <person name="Hosoyama A."/>
            <person name="Mizutani-Ui Y."/>
            <person name="Takahashi N.K."/>
            <person name="Sawano T."/>
            <person name="Inoue R."/>
            <person name="Kaito C."/>
            <person name="Sekimizu K."/>
            <person name="Hirakawa H."/>
            <person name="Kuhara S."/>
            <person name="Goto S."/>
            <person name="Yabuzaki J."/>
            <person name="Kanehisa M."/>
            <person name="Yamashita A."/>
            <person name="Oshima K."/>
            <person name="Furuya K."/>
            <person name="Yoshino C."/>
            <person name="Shiba T."/>
            <person name="Hattori M."/>
            <person name="Ogasawara N."/>
            <person name="Hayashi H."/>
            <person name="Hiramatsu K."/>
        </authorList>
    </citation>
    <scope>NUCLEOTIDE SEQUENCE [LARGE SCALE GENOMIC DNA]</scope>
    <source>
        <strain>Mu50 / ATCC 700699</strain>
    </source>
</reference>
<protein>
    <recommendedName>
        <fullName evidence="1">Aspartate--tRNA ligase</fullName>
        <ecNumber evidence="1">6.1.1.12</ecNumber>
    </recommendedName>
    <alternativeName>
        <fullName evidence="1">Aspartyl-tRNA synthetase</fullName>
        <shortName evidence="1">AspRS</shortName>
    </alternativeName>
</protein>
<name>SYD_STAAM</name>
<evidence type="ECO:0000255" key="1">
    <source>
        <dbReference type="HAMAP-Rule" id="MF_00044"/>
    </source>
</evidence>
<sequence>MSKRTTYCGLVTEAFLGQEITLKGWVNNRRDLGGLIFVDLRDREGIVQVVFNPAFSEEALKIAETVRSEYVVEVQGTVTKRDPETVNPKIKTGQVEVQVTNIKVINKSETPPFSINEENVNVDENIRLKYRYLDLRRQELAQTFKMRHQITRSIRQYLDDEGFFDIETPVLTKSTPEGARDYLVPSRVHDGEFYALPQSPQLFKQLLMISGFDKYYQIVKCFRDEDLRADRQPEFTQVDIEMSFVDQEDVMQMGEEMLKKVVKEVKGVEINGAFPRMTYKEAMRRYGSDKPDTRFEMELIDVSQLGRDMDFKVFKDTVENDGEIKAIVAKGAAEQYTRKDMDALTEFVNIYGAKGLAWVKVVEDGLTGPIGRFFETENVETLLTLTGAEAGDLVMFVADKPNVVAQSLGALRVKLAKELGLIDETKLNFLWVTDWPLLEYDEDAKRYVAAHHPFTSPKEADIAKLGTAPEEAEANAYDIVLNGYELGGGSIRIHDGELQEKMFEVLGFTKEQAQEQFGFLLDAFKYGAPPHGGIALGLDRLVMLLTNRTNLRDTIAFPKTASATCLLTNAPGEVSDKQLEELSLRIRH</sequence>
<organism>
    <name type="scientific">Staphylococcus aureus (strain Mu50 / ATCC 700699)</name>
    <dbReference type="NCBI Taxonomy" id="158878"/>
    <lineage>
        <taxon>Bacteria</taxon>
        <taxon>Bacillati</taxon>
        <taxon>Bacillota</taxon>
        <taxon>Bacilli</taxon>
        <taxon>Bacillales</taxon>
        <taxon>Staphylococcaceae</taxon>
        <taxon>Staphylococcus</taxon>
    </lineage>
</organism>
<gene>
    <name evidence="1" type="primary">aspS</name>
    <name type="ordered locus">SAV1630</name>
</gene>
<dbReference type="EC" id="6.1.1.12" evidence="1"/>
<dbReference type="EMBL" id="BA000017">
    <property type="protein sequence ID" value="BAB57792.1"/>
    <property type="molecule type" value="Genomic_DNA"/>
</dbReference>
<dbReference type="RefSeq" id="WP_000044799.1">
    <property type="nucleotide sequence ID" value="NC_002758.2"/>
</dbReference>
<dbReference type="SMR" id="P67014"/>
<dbReference type="KEGG" id="sav:SAV1630"/>
<dbReference type="HOGENOM" id="CLU_014330_3_2_9"/>
<dbReference type="PhylomeDB" id="P67014"/>
<dbReference type="Proteomes" id="UP000002481">
    <property type="component" value="Chromosome"/>
</dbReference>
<dbReference type="GO" id="GO:0005737">
    <property type="term" value="C:cytoplasm"/>
    <property type="evidence" value="ECO:0007669"/>
    <property type="project" value="UniProtKB-SubCell"/>
</dbReference>
<dbReference type="GO" id="GO:0004815">
    <property type="term" value="F:aspartate-tRNA ligase activity"/>
    <property type="evidence" value="ECO:0007669"/>
    <property type="project" value="UniProtKB-UniRule"/>
</dbReference>
<dbReference type="GO" id="GO:0005524">
    <property type="term" value="F:ATP binding"/>
    <property type="evidence" value="ECO:0007669"/>
    <property type="project" value="UniProtKB-UniRule"/>
</dbReference>
<dbReference type="GO" id="GO:0140096">
    <property type="term" value="F:catalytic activity, acting on a protein"/>
    <property type="evidence" value="ECO:0007669"/>
    <property type="project" value="UniProtKB-ARBA"/>
</dbReference>
<dbReference type="GO" id="GO:0003676">
    <property type="term" value="F:nucleic acid binding"/>
    <property type="evidence" value="ECO:0007669"/>
    <property type="project" value="InterPro"/>
</dbReference>
<dbReference type="GO" id="GO:0016740">
    <property type="term" value="F:transferase activity"/>
    <property type="evidence" value="ECO:0007669"/>
    <property type="project" value="UniProtKB-ARBA"/>
</dbReference>
<dbReference type="GO" id="GO:0006422">
    <property type="term" value="P:aspartyl-tRNA aminoacylation"/>
    <property type="evidence" value="ECO:0007669"/>
    <property type="project" value="UniProtKB-UniRule"/>
</dbReference>
<dbReference type="CDD" id="cd00777">
    <property type="entry name" value="AspRS_core"/>
    <property type="match status" value="1"/>
</dbReference>
<dbReference type="CDD" id="cd04317">
    <property type="entry name" value="EcAspRS_like_N"/>
    <property type="match status" value="1"/>
</dbReference>
<dbReference type="Gene3D" id="3.30.930.10">
    <property type="entry name" value="Bira Bifunctional Protein, Domain 2"/>
    <property type="match status" value="1"/>
</dbReference>
<dbReference type="Gene3D" id="3.30.1360.30">
    <property type="entry name" value="GAD-like domain"/>
    <property type="match status" value="1"/>
</dbReference>
<dbReference type="Gene3D" id="2.40.50.140">
    <property type="entry name" value="Nucleic acid-binding proteins"/>
    <property type="match status" value="1"/>
</dbReference>
<dbReference type="HAMAP" id="MF_00044">
    <property type="entry name" value="Asp_tRNA_synth_type1"/>
    <property type="match status" value="1"/>
</dbReference>
<dbReference type="InterPro" id="IPR004364">
    <property type="entry name" value="Aa-tRNA-synt_II"/>
</dbReference>
<dbReference type="InterPro" id="IPR006195">
    <property type="entry name" value="aa-tRNA-synth_II"/>
</dbReference>
<dbReference type="InterPro" id="IPR045864">
    <property type="entry name" value="aa-tRNA-synth_II/BPL/LPL"/>
</dbReference>
<dbReference type="InterPro" id="IPR004524">
    <property type="entry name" value="Asp-tRNA-ligase_1"/>
</dbReference>
<dbReference type="InterPro" id="IPR047089">
    <property type="entry name" value="Asp-tRNA-ligase_1_N"/>
</dbReference>
<dbReference type="InterPro" id="IPR002312">
    <property type="entry name" value="Asp/Asn-tRNA-synth_IIb"/>
</dbReference>
<dbReference type="InterPro" id="IPR047090">
    <property type="entry name" value="AspRS_core"/>
</dbReference>
<dbReference type="InterPro" id="IPR004115">
    <property type="entry name" value="GAD-like_sf"/>
</dbReference>
<dbReference type="InterPro" id="IPR029351">
    <property type="entry name" value="GAD_dom"/>
</dbReference>
<dbReference type="InterPro" id="IPR012340">
    <property type="entry name" value="NA-bd_OB-fold"/>
</dbReference>
<dbReference type="InterPro" id="IPR004365">
    <property type="entry name" value="NA-bd_OB_tRNA"/>
</dbReference>
<dbReference type="NCBIfam" id="TIGR00459">
    <property type="entry name" value="aspS_bact"/>
    <property type="match status" value="1"/>
</dbReference>
<dbReference type="NCBIfam" id="NF001750">
    <property type="entry name" value="PRK00476.1"/>
    <property type="match status" value="1"/>
</dbReference>
<dbReference type="PANTHER" id="PTHR22594:SF5">
    <property type="entry name" value="ASPARTATE--TRNA LIGASE, MITOCHONDRIAL"/>
    <property type="match status" value="1"/>
</dbReference>
<dbReference type="PANTHER" id="PTHR22594">
    <property type="entry name" value="ASPARTYL/LYSYL-TRNA SYNTHETASE"/>
    <property type="match status" value="1"/>
</dbReference>
<dbReference type="Pfam" id="PF02938">
    <property type="entry name" value="GAD"/>
    <property type="match status" value="1"/>
</dbReference>
<dbReference type="Pfam" id="PF00152">
    <property type="entry name" value="tRNA-synt_2"/>
    <property type="match status" value="1"/>
</dbReference>
<dbReference type="Pfam" id="PF01336">
    <property type="entry name" value="tRNA_anti-codon"/>
    <property type="match status" value="1"/>
</dbReference>
<dbReference type="PRINTS" id="PR01042">
    <property type="entry name" value="TRNASYNTHASP"/>
</dbReference>
<dbReference type="SUPFAM" id="SSF55681">
    <property type="entry name" value="Class II aaRS and biotin synthetases"/>
    <property type="match status" value="1"/>
</dbReference>
<dbReference type="SUPFAM" id="SSF55261">
    <property type="entry name" value="GAD domain-like"/>
    <property type="match status" value="1"/>
</dbReference>
<dbReference type="SUPFAM" id="SSF50249">
    <property type="entry name" value="Nucleic acid-binding proteins"/>
    <property type="match status" value="1"/>
</dbReference>
<dbReference type="PROSITE" id="PS50862">
    <property type="entry name" value="AA_TRNA_LIGASE_II"/>
    <property type="match status" value="1"/>
</dbReference>
<accession>P67014</accession>
<accession>Q99TL9</accession>